<protein>
    <recommendedName>
        <fullName evidence="1">Uroporphyrinogen decarboxylase</fullName>
        <shortName evidence="1">UPD</shortName>
        <shortName evidence="1">URO-D</shortName>
        <ecNumber evidence="1">4.1.1.37</ecNumber>
    </recommendedName>
</protein>
<feature type="chain" id="PRO_1000197527" description="Uroporphyrinogen decarboxylase">
    <location>
        <begin position="1"/>
        <end position="347"/>
    </location>
</feature>
<feature type="binding site" evidence="1">
    <location>
        <begin position="24"/>
        <end position="28"/>
    </location>
    <ligand>
        <name>substrate</name>
    </ligand>
</feature>
<feature type="binding site" evidence="1">
    <location>
        <position position="74"/>
    </location>
    <ligand>
        <name>substrate</name>
    </ligand>
</feature>
<feature type="binding site" evidence="1">
    <location>
        <position position="145"/>
    </location>
    <ligand>
        <name>substrate</name>
    </ligand>
</feature>
<feature type="binding site" evidence="1">
    <location>
        <position position="200"/>
    </location>
    <ligand>
        <name>substrate</name>
    </ligand>
</feature>
<feature type="binding site" evidence="1">
    <location>
        <position position="315"/>
    </location>
    <ligand>
        <name>substrate</name>
    </ligand>
</feature>
<feature type="site" description="Transition state stabilizer" evidence="1">
    <location>
        <position position="74"/>
    </location>
</feature>
<sequence>MKNDIFLKSLKKEPIARYPVWLMRQAGRYLPEYRAIRQKYKSFLDFCKNVEDAAIVSLQPVDILGVDAVIMFSDILVLLEPMGIKVSFEAGEGPVLDHNFDFKNLKSQGISGDLSYVFELLKVLKEKSPVPVIGFCGAPFTLASYVIEKESSRDFTKTKVFMYENQKDFHILMEKLSEALVEYIDHQIKSGADVIQIFDSWSMSLSRFAYKEYVYDYNAFIIKSIKQKHPNTPIIYFFRGSSSHIEDAVDLGADALSVDWSVCINDVCKRYPDLVFQGNLEPQILLLDKENIRKHVEEFVMCIPRDTAFVVNLGHGITPDVSKDNVKYFVECVKEVSYGKRNLFKKC</sequence>
<name>DCUP_HYDS0</name>
<comment type="function">
    <text evidence="1">Catalyzes the decarboxylation of four acetate groups of uroporphyrinogen-III to yield coproporphyrinogen-III.</text>
</comment>
<comment type="catalytic activity">
    <reaction evidence="1">
        <text>uroporphyrinogen III + 4 H(+) = coproporphyrinogen III + 4 CO2</text>
        <dbReference type="Rhea" id="RHEA:19865"/>
        <dbReference type="ChEBI" id="CHEBI:15378"/>
        <dbReference type="ChEBI" id="CHEBI:16526"/>
        <dbReference type="ChEBI" id="CHEBI:57308"/>
        <dbReference type="ChEBI" id="CHEBI:57309"/>
        <dbReference type="EC" id="4.1.1.37"/>
    </reaction>
</comment>
<comment type="pathway">
    <text evidence="1">Porphyrin-containing compound metabolism; protoporphyrin-IX biosynthesis; coproporphyrinogen-III from 5-aminolevulinate: step 4/4.</text>
</comment>
<comment type="subunit">
    <text evidence="1">Homodimer.</text>
</comment>
<comment type="subcellular location">
    <subcellularLocation>
        <location evidence="1">Cytoplasm</location>
    </subcellularLocation>
</comment>
<comment type="similarity">
    <text evidence="1">Belongs to the uroporphyrinogen decarboxylase family.</text>
</comment>
<keyword id="KW-0963">Cytoplasm</keyword>
<keyword id="KW-0210">Decarboxylase</keyword>
<keyword id="KW-0456">Lyase</keyword>
<keyword id="KW-0627">Porphyrin biosynthesis</keyword>
<reference key="1">
    <citation type="journal article" date="2009" name="J. Bacteriol.">
        <title>Complete and draft genome sequences of six members of the Aquificales.</title>
        <authorList>
            <person name="Reysenbach A.-L."/>
            <person name="Hamamura N."/>
            <person name="Podar M."/>
            <person name="Griffiths E."/>
            <person name="Ferreira S."/>
            <person name="Hochstein R."/>
            <person name="Heidelberg J."/>
            <person name="Johnson J."/>
            <person name="Mead D."/>
            <person name="Pohorille A."/>
            <person name="Sarmiento M."/>
            <person name="Schweighofer K."/>
            <person name="Seshadri R."/>
            <person name="Voytek M.A."/>
        </authorList>
    </citation>
    <scope>NUCLEOTIDE SEQUENCE [LARGE SCALE GENOMIC DNA]</scope>
    <source>
        <strain>Y04AAS1</strain>
    </source>
</reference>
<accession>B4U9S4</accession>
<dbReference type="EC" id="4.1.1.37" evidence="1"/>
<dbReference type="EMBL" id="CP001130">
    <property type="protein sequence ID" value="ACG57885.1"/>
    <property type="molecule type" value="Genomic_DNA"/>
</dbReference>
<dbReference type="RefSeq" id="WP_012514241.1">
    <property type="nucleotide sequence ID" value="NC_011126.1"/>
</dbReference>
<dbReference type="SMR" id="B4U9S4"/>
<dbReference type="STRING" id="380749.HY04AAS1_1200"/>
<dbReference type="KEGG" id="hya:HY04AAS1_1200"/>
<dbReference type="eggNOG" id="COG0407">
    <property type="taxonomic scope" value="Bacteria"/>
</dbReference>
<dbReference type="HOGENOM" id="CLU_040933_0_0_0"/>
<dbReference type="OrthoDB" id="9806656at2"/>
<dbReference type="UniPathway" id="UPA00251">
    <property type="reaction ID" value="UER00321"/>
</dbReference>
<dbReference type="GO" id="GO:0005829">
    <property type="term" value="C:cytosol"/>
    <property type="evidence" value="ECO:0007669"/>
    <property type="project" value="TreeGrafter"/>
</dbReference>
<dbReference type="GO" id="GO:0004853">
    <property type="term" value="F:uroporphyrinogen decarboxylase activity"/>
    <property type="evidence" value="ECO:0007669"/>
    <property type="project" value="UniProtKB-UniRule"/>
</dbReference>
<dbReference type="GO" id="GO:0006782">
    <property type="term" value="P:protoporphyrinogen IX biosynthetic process"/>
    <property type="evidence" value="ECO:0007669"/>
    <property type="project" value="UniProtKB-UniRule"/>
</dbReference>
<dbReference type="CDD" id="cd00717">
    <property type="entry name" value="URO-D"/>
    <property type="match status" value="1"/>
</dbReference>
<dbReference type="Gene3D" id="3.20.20.210">
    <property type="match status" value="1"/>
</dbReference>
<dbReference type="HAMAP" id="MF_00218">
    <property type="entry name" value="URO_D"/>
    <property type="match status" value="1"/>
</dbReference>
<dbReference type="InterPro" id="IPR038071">
    <property type="entry name" value="UROD/MetE-like_sf"/>
</dbReference>
<dbReference type="InterPro" id="IPR006361">
    <property type="entry name" value="Uroporphyrinogen_deCO2ase_HemE"/>
</dbReference>
<dbReference type="InterPro" id="IPR000257">
    <property type="entry name" value="Uroporphyrinogen_deCOase"/>
</dbReference>
<dbReference type="NCBIfam" id="TIGR01464">
    <property type="entry name" value="hemE"/>
    <property type="match status" value="1"/>
</dbReference>
<dbReference type="PANTHER" id="PTHR21091">
    <property type="entry name" value="METHYLTETRAHYDROFOLATE:HOMOCYSTEINE METHYLTRANSFERASE RELATED"/>
    <property type="match status" value="1"/>
</dbReference>
<dbReference type="PANTHER" id="PTHR21091:SF169">
    <property type="entry name" value="UROPORPHYRINOGEN DECARBOXYLASE"/>
    <property type="match status" value="1"/>
</dbReference>
<dbReference type="Pfam" id="PF01208">
    <property type="entry name" value="URO-D"/>
    <property type="match status" value="1"/>
</dbReference>
<dbReference type="SUPFAM" id="SSF51726">
    <property type="entry name" value="UROD/MetE-like"/>
    <property type="match status" value="1"/>
</dbReference>
<dbReference type="PROSITE" id="PS00906">
    <property type="entry name" value="UROD_1"/>
    <property type="match status" value="1"/>
</dbReference>
<dbReference type="PROSITE" id="PS00907">
    <property type="entry name" value="UROD_2"/>
    <property type="match status" value="1"/>
</dbReference>
<evidence type="ECO:0000255" key="1">
    <source>
        <dbReference type="HAMAP-Rule" id="MF_00218"/>
    </source>
</evidence>
<organism>
    <name type="scientific">Hydrogenobaculum sp. (strain Y04AAS1)</name>
    <dbReference type="NCBI Taxonomy" id="380749"/>
    <lineage>
        <taxon>Bacteria</taxon>
        <taxon>Pseudomonadati</taxon>
        <taxon>Aquificota</taxon>
        <taxon>Aquificia</taxon>
        <taxon>Aquificales</taxon>
        <taxon>Aquificaceae</taxon>
        <taxon>Hydrogenobaculum</taxon>
    </lineage>
</organism>
<gene>
    <name evidence="1" type="primary">hemE</name>
    <name type="ordered locus">HY04AAS1_1200</name>
</gene>
<proteinExistence type="inferred from homology"/>